<keyword id="KW-0472">Membrane</keyword>
<keyword id="KW-0520">NAD</keyword>
<keyword id="KW-0521">NADP</keyword>
<keyword id="KW-0560">Oxidoreductase</keyword>
<keyword id="KW-1185">Reference proteome</keyword>
<keyword id="KW-0703">Sarcoplasmic reticulum</keyword>
<keyword id="KW-0732">Signal</keyword>
<evidence type="ECO:0000250" key="1">
    <source>
        <dbReference type="UniProtKB" id="A6NNS2"/>
    </source>
</evidence>
<evidence type="ECO:0000250" key="2">
    <source>
        <dbReference type="UniProtKB" id="Q8CHS7"/>
    </source>
</evidence>
<evidence type="ECO:0000250" key="3">
    <source>
        <dbReference type="UniProtKB" id="Q99714"/>
    </source>
</evidence>
<evidence type="ECO:0000255" key="4"/>
<evidence type="ECO:0000255" key="5">
    <source>
        <dbReference type="PROSITE-ProRule" id="PRU10001"/>
    </source>
</evidence>
<evidence type="ECO:0000255" key="6">
    <source>
        <dbReference type="RuleBase" id="RU000363"/>
    </source>
</evidence>
<evidence type="ECO:0000269" key="7">
    <source>
    </source>
</evidence>
<evidence type="ECO:0000303" key="8">
    <source>
    </source>
</evidence>
<evidence type="ECO:0000312" key="9">
    <source>
        <dbReference type="RGD" id="1306989"/>
    </source>
</evidence>
<proteinExistence type="evidence at transcript level"/>
<dbReference type="EC" id="1.1.1.105" evidence="2"/>
<dbReference type="EMBL" id="AABR07029837">
    <property type="status" value="NOT_ANNOTATED_CDS"/>
    <property type="molecule type" value="Genomic_DNA"/>
</dbReference>
<dbReference type="RefSeq" id="NP_001258527.1">
    <property type="nucleotide sequence ID" value="NM_001271598.1"/>
</dbReference>
<dbReference type="SMR" id="D3ZGP9"/>
<dbReference type="FunCoup" id="D3ZGP9">
    <property type="interactions" value="3"/>
</dbReference>
<dbReference type="STRING" id="10116.ENSRNOP00000031559"/>
<dbReference type="PhosphoSitePlus" id="D3ZGP9"/>
<dbReference type="PaxDb" id="10116-ENSRNOP00000031559"/>
<dbReference type="PeptideAtlas" id="D3ZGP9"/>
<dbReference type="Ensembl" id="ENSRNOT00000036752.7">
    <property type="protein sequence ID" value="ENSRNOP00000031559.4"/>
    <property type="gene ID" value="ENSRNOG00000026548.7"/>
</dbReference>
<dbReference type="GeneID" id="287411"/>
<dbReference type="KEGG" id="rno:287411"/>
<dbReference type="AGR" id="RGD:1306989"/>
<dbReference type="CTD" id="201140"/>
<dbReference type="RGD" id="1306989">
    <property type="gene designation" value="Dhrs7c"/>
</dbReference>
<dbReference type="eggNOG" id="KOG1205">
    <property type="taxonomic scope" value="Eukaryota"/>
</dbReference>
<dbReference type="GeneTree" id="ENSGT00940000157100"/>
<dbReference type="HOGENOM" id="CLU_010194_2_1_1"/>
<dbReference type="InParanoid" id="D3ZGP9"/>
<dbReference type="OMA" id="NIMDVNY"/>
<dbReference type="OrthoDB" id="24357at9989"/>
<dbReference type="PhylomeDB" id="D3ZGP9"/>
<dbReference type="TreeFam" id="TF313474"/>
<dbReference type="PRO" id="PR:D3ZGP9"/>
<dbReference type="Proteomes" id="UP000002494">
    <property type="component" value="Chromosome 10"/>
</dbReference>
<dbReference type="Bgee" id="ENSRNOG00000026548">
    <property type="expression patterns" value="Expressed in quadriceps femoris and 12 other cell types or tissues"/>
</dbReference>
<dbReference type="GO" id="GO:0014801">
    <property type="term" value="C:longitudinal sarcoplasmic reticulum"/>
    <property type="evidence" value="ECO:0000250"/>
    <property type="project" value="UniProtKB"/>
</dbReference>
<dbReference type="GO" id="GO:0033017">
    <property type="term" value="C:sarcoplasmic reticulum membrane"/>
    <property type="evidence" value="ECO:0000250"/>
    <property type="project" value="UniProtKB"/>
</dbReference>
<dbReference type="GO" id="GO:0004745">
    <property type="term" value="F:all-trans-retinol dehydrogenase (NAD+) activity"/>
    <property type="evidence" value="ECO:0000250"/>
    <property type="project" value="UniProtKB"/>
</dbReference>
<dbReference type="GO" id="GO:0016616">
    <property type="term" value="F:oxidoreductase activity, acting on the CH-OH group of donors, NAD or NADP as acceptor"/>
    <property type="evidence" value="ECO:0000318"/>
    <property type="project" value="GO_Central"/>
</dbReference>
<dbReference type="GO" id="GO:0046323">
    <property type="term" value="P:D-glucose import"/>
    <property type="evidence" value="ECO:0000250"/>
    <property type="project" value="UniProtKB"/>
</dbReference>
<dbReference type="GO" id="GO:0006874">
    <property type="term" value="P:intracellular calcium ion homeostasis"/>
    <property type="evidence" value="ECO:0000250"/>
    <property type="project" value="UniProtKB"/>
</dbReference>
<dbReference type="GO" id="GO:0010880">
    <property type="term" value="P:regulation of release of sequestered calcium ion into cytosol by sarcoplasmic reticulum"/>
    <property type="evidence" value="ECO:0000250"/>
    <property type="project" value="UniProtKB"/>
</dbReference>
<dbReference type="CDD" id="cd05332">
    <property type="entry name" value="11beta-HSD1_like_SDR_c"/>
    <property type="match status" value="1"/>
</dbReference>
<dbReference type="FunFam" id="3.40.50.720:FF:000122">
    <property type="entry name" value="Dehydrogenase/reductase SDR family member 7B"/>
    <property type="match status" value="1"/>
</dbReference>
<dbReference type="Gene3D" id="3.40.50.720">
    <property type="entry name" value="NAD(P)-binding Rossmann-like Domain"/>
    <property type="match status" value="1"/>
</dbReference>
<dbReference type="InterPro" id="IPR036291">
    <property type="entry name" value="NAD(P)-bd_dom_sf"/>
</dbReference>
<dbReference type="InterPro" id="IPR020904">
    <property type="entry name" value="Sc_DH/Rdtase_CS"/>
</dbReference>
<dbReference type="InterPro" id="IPR002347">
    <property type="entry name" value="SDR_fam"/>
</dbReference>
<dbReference type="InterPro" id="IPR052148">
    <property type="entry name" value="SDR_family_member_7C"/>
</dbReference>
<dbReference type="PANTHER" id="PTHR44668">
    <property type="match status" value="1"/>
</dbReference>
<dbReference type="PANTHER" id="PTHR44668:SF2">
    <property type="entry name" value="DEHYDROGENASE_REDUCTASE SDR FAMILY MEMBER 7C"/>
    <property type="match status" value="1"/>
</dbReference>
<dbReference type="Pfam" id="PF00106">
    <property type="entry name" value="adh_short"/>
    <property type="match status" value="1"/>
</dbReference>
<dbReference type="PRINTS" id="PR00081">
    <property type="entry name" value="GDHRDH"/>
</dbReference>
<dbReference type="PRINTS" id="PR00080">
    <property type="entry name" value="SDRFAMILY"/>
</dbReference>
<dbReference type="SUPFAM" id="SSF51735">
    <property type="entry name" value="NAD(P)-binding Rossmann-fold domains"/>
    <property type="match status" value="1"/>
</dbReference>
<dbReference type="PROSITE" id="PS00061">
    <property type="entry name" value="ADH_SHORT"/>
    <property type="match status" value="1"/>
</dbReference>
<organism>
    <name type="scientific">Rattus norvegicus</name>
    <name type="common">Rat</name>
    <dbReference type="NCBI Taxonomy" id="10116"/>
    <lineage>
        <taxon>Eukaryota</taxon>
        <taxon>Metazoa</taxon>
        <taxon>Chordata</taxon>
        <taxon>Craniata</taxon>
        <taxon>Vertebrata</taxon>
        <taxon>Euteleostomi</taxon>
        <taxon>Mammalia</taxon>
        <taxon>Eutheria</taxon>
        <taxon>Euarchontoglires</taxon>
        <taxon>Glires</taxon>
        <taxon>Rodentia</taxon>
        <taxon>Myomorpha</taxon>
        <taxon>Muroidea</taxon>
        <taxon>Muridae</taxon>
        <taxon>Murinae</taxon>
        <taxon>Rattus</taxon>
    </lineage>
</organism>
<reference key="1">
    <citation type="journal article" date="2004" name="Nature">
        <title>Genome sequence of the Brown Norway rat yields insights into mammalian evolution.</title>
        <authorList>
            <person name="Gibbs R.A."/>
            <person name="Weinstock G.M."/>
            <person name="Metzker M.L."/>
            <person name="Muzny D.M."/>
            <person name="Sodergren E.J."/>
            <person name="Scherer S."/>
            <person name="Scott G."/>
            <person name="Steffen D."/>
            <person name="Worley K.C."/>
            <person name="Burch P.E."/>
            <person name="Okwuonu G."/>
            <person name="Hines S."/>
            <person name="Lewis L."/>
            <person name="Deramo C."/>
            <person name="Delgado O."/>
            <person name="Dugan-Rocha S."/>
            <person name="Miner G."/>
            <person name="Morgan M."/>
            <person name="Hawes A."/>
            <person name="Gill R."/>
            <person name="Holt R.A."/>
            <person name="Adams M.D."/>
            <person name="Amanatides P.G."/>
            <person name="Baden-Tillson H."/>
            <person name="Barnstead M."/>
            <person name="Chin S."/>
            <person name="Evans C.A."/>
            <person name="Ferriera S."/>
            <person name="Fosler C."/>
            <person name="Glodek A."/>
            <person name="Gu Z."/>
            <person name="Jennings D."/>
            <person name="Kraft C.L."/>
            <person name="Nguyen T."/>
            <person name="Pfannkoch C.M."/>
            <person name="Sitter C."/>
            <person name="Sutton G.G."/>
            <person name="Venter J.C."/>
            <person name="Woodage T."/>
            <person name="Smith D."/>
            <person name="Lee H.-M."/>
            <person name="Gustafson E."/>
            <person name="Cahill P."/>
            <person name="Kana A."/>
            <person name="Doucette-Stamm L."/>
            <person name="Weinstock K."/>
            <person name="Fechtel K."/>
            <person name="Weiss R.B."/>
            <person name="Dunn D.M."/>
            <person name="Green E.D."/>
            <person name="Blakesley R.W."/>
            <person name="Bouffard G.G."/>
            <person name="De Jong P.J."/>
            <person name="Osoegawa K."/>
            <person name="Zhu B."/>
            <person name="Marra M."/>
            <person name="Schein J."/>
            <person name="Bosdet I."/>
            <person name="Fjell C."/>
            <person name="Jones S."/>
            <person name="Krzywinski M."/>
            <person name="Mathewson C."/>
            <person name="Siddiqui A."/>
            <person name="Wye N."/>
            <person name="McPherson J."/>
            <person name="Zhao S."/>
            <person name="Fraser C.M."/>
            <person name="Shetty J."/>
            <person name="Shatsman S."/>
            <person name="Geer K."/>
            <person name="Chen Y."/>
            <person name="Abramzon S."/>
            <person name="Nierman W.C."/>
            <person name="Havlak P.H."/>
            <person name="Chen R."/>
            <person name="Durbin K.J."/>
            <person name="Egan A."/>
            <person name="Ren Y."/>
            <person name="Song X.-Z."/>
            <person name="Li B."/>
            <person name="Liu Y."/>
            <person name="Qin X."/>
            <person name="Cawley S."/>
            <person name="Cooney A.J."/>
            <person name="D'Souza L.M."/>
            <person name="Martin K."/>
            <person name="Wu J.Q."/>
            <person name="Gonzalez-Garay M.L."/>
            <person name="Jackson A.R."/>
            <person name="Kalafus K.J."/>
            <person name="McLeod M.P."/>
            <person name="Milosavljevic A."/>
            <person name="Virk D."/>
            <person name="Volkov A."/>
            <person name="Wheeler D.A."/>
            <person name="Zhang Z."/>
            <person name="Bailey J.A."/>
            <person name="Eichler E.E."/>
            <person name="Tuzun E."/>
            <person name="Birney E."/>
            <person name="Mongin E."/>
            <person name="Ureta-Vidal A."/>
            <person name="Woodwark C."/>
            <person name="Zdobnov E."/>
            <person name="Bork P."/>
            <person name="Suyama M."/>
            <person name="Torrents D."/>
            <person name="Alexandersson M."/>
            <person name="Trask B.J."/>
            <person name="Young J.M."/>
            <person name="Huang H."/>
            <person name="Wang H."/>
            <person name="Xing H."/>
            <person name="Daniels S."/>
            <person name="Gietzen D."/>
            <person name="Schmidt J."/>
            <person name="Stevens K."/>
            <person name="Vitt U."/>
            <person name="Wingrove J."/>
            <person name="Camara F."/>
            <person name="Mar Alba M."/>
            <person name="Abril J.F."/>
            <person name="Guigo R."/>
            <person name="Smit A."/>
            <person name="Dubchak I."/>
            <person name="Rubin E.M."/>
            <person name="Couronne O."/>
            <person name="Poliakov A."/>
            <person name="Huebner N."/>
            <person name="Ganten D."/>
            <person name="Goesele C."/>
            <person name="Hummel O."/>
            <person name="Kreitler T."/>
            <person name="Lee Y.-A."/>
            <person name="Monti J."/>
            <person name="Schulz H."/>
            <person name="Zimdahl H."/>
            <person name="Himmelbauer H."/>
            <person name="Lehrach H."/>
            <person name="Jacob H.J."/>
            <person name="Bromberg S."/>
            <person name="Gullings-Handley J."/>
            <person name="Jensen-Seaman M.I."/>
            <person name="Kwitek A.E."/>
            <person name="Lazar J."/>
            <person name="Pasko D."/>
            <person name="Tonellato P.J."/>
            <person name="Twigger S."/>
            <person name="Ponting C.P."/>
            <person name="Duarte J.M."/>
            <person name="Rice S."/>
            <person name="Goodstadt L."/>
            <person name="Beatson S.A."/>
            <person name="Emes R.D."/>
            <person name="Winter E.E."/>
            <person name="Webber C."/>
            <person name="Brandt P."/>
            <person name="Nyakatura G."/>
            <person name="Adetobi M."/>
            <person name="Chiaromonte F."/>
            <person name="Elnitski L."/>
            <person name="Eswara P."/>
            <person name="Hardison R.C."/>
            <person name="Hou M."/>
            <person name="Kolbe D."/>
            <person name="Makova K."/>
            <person name="Miller W."/>
            <person name="Nekrutenko A."/>
            <person name="Riemer C."/>
            <person name="Schwartz S."/>
            <person name="Taylor J."/>
            <person name="Yang S."/>
            <person name="Zhang Y."/>
            <person name="Lindpaintner K."/>
            <person name="Andrews T.D."/>
            <person name="Caccamo M."/>
            <person name="Clamp M."/>
            <person name="Clarke L."/>
            <person name="Curwen V."/>
            <person name="Durbin R.M."/>
            <person name="Eyras E."/>
            <person name="Searle S.M."/>
            <person name="Cooper G.M."/>
            <person name="Batzoglou S."/>
            <person name="Brudno M."/>
            <person name="Sidow A."/>
            <person name="Stone E.A."/>
            <person name="Payseur B.A."/>
            <person name="Bourque G."/>
            <person name="Lopez-Otin C."/>
            <person name="Puente X.S."/>
            <person name="Chakrabarti K."/>
            <person name="Chatterji S."/>
            <person name="Dewey C."/>
            <person name="Pachter L."/>
            <person name="Bray N."/>
            <person name="Yap V.B."/>
            <person name="Caspi A."/>
            <person name="Tesler G."/>
            <person name="Pevzner P.A."/>
            <person name="Haussler D."/>
            <person name="Roskin K.M."/>
            <person name="Baertsch R."/>
            <person name="Clawson H."/>
            <person name="Furey T.S."/>
            <person name="Hinrichs A.S."/>
            <person name="Karolchik D."/>
            <person name="Kent W.J."/>
            <person name="Rosenbloom K.R."/>
            <person name="Trumbower H."/>
            <person name="Weirauch M."/>
            <person name="Cooper D.N."/>
            <person name="Stenson P.D."/>
            <person name="Ma B."/>
            <person name="Brent M."/>
            <person name="Arumugam M."/>
            <person name="Shteynberg D."/>
            <person name="Copley R.R."/>
            <person name="Taylor M.S."/>
            <person name="Riethman H."/>
            <person name="Mudunuri U."/>
            <person name="Peterson J."/>
            <person name="Guyer M."/>
            <person name="Felsenfeld A."/>
            <person name="Old S."/>
            <person name="Mockrin S."/>
            <person name="Collins F.S."/>
        </authorList>
    </citation>
    <scope>NUCLEOTIDE SEQUENCE [LARGE SCALE GENOMIC DNA]</scope>
    <source>
        <strain>Brown Norway</strain>
    </source>
</reference>
<reference key="2">
    <citation type="journal article" date="2012" name="Eur. J. Heart Fail.">
        <title>DHRS7c, a novel cardiomyocyte-expressed gene that is down-regulated by adrenergic stimulation and in heart failure.</title>
        <authorList>
            <person name="Lu B."/>
            <person name="Tigchelaar W."/>
            <person name="Ruifrok W.P."/>
            <person name="van Gilst W.H."/>
            <person name="de Boer R.A."/>
            <person name="Sillje H.H."/>
        </authorList>
    </citation>
    <scope>TISSUE SPECIFICITY</scope>
    <scope>DEVELOPMENTAL STAGE</scope>
    <scope>REPRESSION BY ADRENERGIC; FORSKOLIN AND PHORBOL MYRISTATE ACETATE</scope>
</reference>
<sequence>MGIMAVLMLPLLLLGVSGLLFIYQEASRLWSKSAVQNKVVVITDALSGLGKECARVFNAGGARLVLCGKNWEGLESLYAALTSVADPSKTFTPKLVLLDLSDISCVEDVAKEVLDCYGCVDILINNASVKVKGPAHKISLELDKKIMDANYFGPITFTKVLLPNMISRRTGQIVLVNNIQAKFGIPFRTAYAASKHAVMGFFDCLRAEVEEYDVVVSTVSPTFIRSYQAYPEQRNWGSSICKFFCRKLTYGVHPVEVAEEVMRTVRRKKQEVFMANPVPKAAVFIRTFFPELFFAVVACGVKEKLSVPEEG</sequence>
<accession>D3ZGP9</accession>
<feature type="signal peptide" evidence="4">
    <location>
        <begin position="1"/>
        <end position="18"/>
    </location>
</feature>
<feature type="chain" id="PRO_0000454627" description="Dehydrogenase/reductase SDR family member 7C" evidence="4">
    <location>
        <begin position="19"/>
        <end position="311"/>
    </location>
</feature>
<feature type="active site" description="Proton acceptor" evidence="5">
    <location>
        <position position="191"/>
    </location>
</feature>
<feature type="binding site" evidence="3">
    <location>
        <position position="47"/>
    </location>
    <ligand>
        <name>NAD(+)</name>
        <dbReference type="ChEBI" id="CHEBI:57540"/>
    </ligand>
</feature>
<feature type="binding site" evidence="3">
    <location>
        <position position="49"/>
    </location>
    <ligand>
        <name>NAD(+)</name>
        <dbReference type="ChEBI" id="CHEBI:57540"/>
    </ligand>
</feature>
<feature type="binding site" evidence="3">
    <location>
        <position position="191"/>
    </location>
    <ligand>
        <name>NAD(+)</name>
        <dbReference type="ChEBI" id="CHEBI:57540"/>
    </ligand>
</feature>
<feature type="binding site" evidence="3">
    <location>
        <position position="195"/>
    </location>
    <ligand>
        <name>NAD(+)</name>
        <dbReference type="ChEBI" id="CHEBI:57540"/>
    </ligand>
</feature>
<feature type="binding site" evidence="3">
    <location>
        <position position="226"/>
    </location>
    <ligand>
        <name>NAD(+)</name>
        <dbReference type="ChEBI" id="CHEBI:57540"/>
    </ligand>
</feature>
<comment type="function">
    <text evidence="2">NADH-dependent oxidoreductase which catalyzes the oxidation of all-trans-retinol to all-trans-retinal. Plays a role in the regulation of cardiac and skeletal muscle metabolic functions. Maintains Ca(2+) intracellular homeostasis by repressing Ca(2+) release from the sarcoplasmic reticulum (SR) in myotubes, possibly through local alternations in NAD/NADH or retinol/retinal. Also plays a role in Ca(2+) homeostasis by controlling Ca(2+) overload in the cytosol and the SR in myotubes. Involved in glucose uptake into skeletal muscles and muscle performance by activating PI3K and mTORC2-mediated AKT1 phosphorylation signaling pathways, possibly through the action of its downstream catalytic product all-trans-retinoic acid.</text>
</comment>
<comment type="catalytic activity">
    <reaction evidence="2">
        <text>all-trans-retinol + NAD(+) = all-trans-retinal + NADH + H(+)</text>
        <dbReference type="Rhea" id="RHEA:21284"/>
        <dbReference type="ChEBI" id="CHEBI:15378"/>
        <dbReference type="ChEBI" id="CHEBI:17336"/>
        <dbReference type="ChEBI" id="CHEBI:17898"/>
        <dbReference type="ChEBI" id="CHEBI:57540"/>
        <dbReference type="ChEBI" id="CHEBI:57945"/>
        <dbReference type="EC" id="1.1.1.105"/>
    </reaction>
    <physiologicalReaction direction="left-to-right" evidence="2">
        <dbReference type="Rhea" id="RHEA:21285"/>
    </physiologicalReaction>
</comment>
<comment type="subcellular location">
    <subcellularLocation>
        <location evidence="2">Sarcoplasmic reticulum membrane</location>
    </subcellularLocation>
    <text evidence="2">The N-terminus region encompasses a short hydrophobic sequence bound to the sarcoplasmic reticulum membrane, whereas the C-terminus catalytic domain faces the myoplasm.</text>
</comment>
<comment type="tissue specificity">
    <text evidence="7">Expressed in skeletal muscle, cardiac muscle and skin.</text>
</comment>
<comment type="developmental stage">
    <text evidence="7">Expression in cardiomyocytes is higher in adult as compared with neonatal.</text>
</comment>
<comment type="induction">
    <text evidence="7">Repressed by adrenergic agents (phenylephrine, isoproterenol, dobutamine and clenbuterol), forskolin and phorbol myristate acetate (at transcriptional levels) (PubMed:22143674). No change in expression with endothelin-1 (PubMed:22143674).</text>
</comment>
<comment type="domain">
    <text evidence="2">The N-terminus region encompasses a short hydrophobic sequence bound to the sarcoplasmic reticulum membrane, whereas the C-terminus catalytic domain faces the myoplasm.</text>
</comment>
<comment type="similarity">
    <text evidence="6">Belongs to the short-chain dehydrogenases/reductases (SDR) family.</text>
</comment>
<gene>
    <name evidence="9" type="primary">Dhrs7c</name>
    <name evidence="1" type="synonym">Sdr32c2</name>
</gene>
<name>DRS7C_RAT</name>
<protein>
    <recommendedName>
        <fullName evidence="8">Dehydrogenase/reductase SDR family member 7C</fullName>
        <ecNumber evidence="2">1.1.1.105</ecNumber>
    </recommendedName>
    <alternativeName>
        <fullName evidence="2">Sarcoplasmic reticulum protein of 35 kDa</fullName>
        <shortName evidence="2">Protein SRP-35</shortName>
    </alternativeName>
    <alternativeName>
        <fullName evidence="2">Short-chain dehydrogenase/reductase family 32C member 2</fullName>
        <shortName evidence="1">Protein SDR32C2</shortName>
    </alternativeName>
</protein>